<protein>
    <recommendedName>
        <fullName evidence="1">Fructose-1,6-bisphosphatase class 1</fullName>
        <shortName evidence="1">FBPase class 1</shortName>
        <ecNumber evidence="1">3.1.3.11</ecNumber>
    </recommendedName>
    <alternativeName>
        <fullName evidence="1">D-fructose-1,6-bisphosphate 1-phosphohydrolase class 1</fullName>
    </alternativeName>
</protein>
<gene>
    <name evidence="1" type="primary">fbp</name>
    <name type="ordered locus">Cvib_0509</name>
</gene>
<name>F16PA_CHLPM</name>
<dbReference type="EC" id="3.1.3.11" evidence="1"/>
<dbReference type="EMBL" id="CP000607">
    <property type="protein sequence ID" value="ABP36531.1"/>
    <property type="molecule type" value="Genomic_DNA"/>
</dbReference>
<dbReference type="SMR" id="A4SDH2"/>
<dbReference type="STRING" id="290318.Cvib_0509"/>
<dbReference type="KEGG" id="pvi:Cvib_0509"/>
<dbReference type="eggNOG" id="COG0158">
    <property type="taxonomic scope" value="Bacteria"/>
</dbReference>
<dbReference type="HOGENOM" id="CLU_039977_2_2_10"/>
<dbReference type="OrthoDB" id="9806756at2"/>
<dbReference type="UniPathway" id="UPA00116"/>
<dbReference type="GO" id="GO:0005829">
    <property type="term" value="C:cytosol"/>
    <property type="evidence" value="ECO:0007669"/>
    <property type="project" value="TreeGrafter"/>
</dbReference>
<dbReference type="GO" id="GO:0042132">
    <property type="term" value="F:fructose 1,6-bisphosphate 1-phosphatase activity"/>
    <property type="evidence" value="ECO:0007669"/>
    <property type="project" value="UniProtKB-UniRule"/>
</dbReference>
<dbReference type="GO" id="GO:0000287">
    <property type="term" value="F:magnesium ion binding"/>
    <property type="evidence" value="ECO:0007669"/>
    <property type="project" value="UniProtKB-UniRule"/>
</dbReference>
<dbReference type="GO" id="GO:0030388">
    <property type="term" value="P:fructose 1,6-bisphosphate metabolic process"/>
    <property type="evidence" value="ECO:0007669"/>
    <property type="project" value="TreeGrafter"/>
</dbReference>
<dbReference type="GO" id="GO:0006002">
    <property type="term" value="P:fructose 6-phosphate metabolic process"/>
    <property type="evidence" value="ECO:0007669"/>
    <property type="project" value="TreeGrafter"/>
</dbReference>
<dbReference type="GO" id="GO:0006000">
    <property type="term" value="P:fructose metabolic process"/>
    <property type="evidence" value="ECO:0007669"/>
    <property type="project" value="TreeGrafter"/>
</dbReference>
<dbReference type="GO" id="GO:0006094">
    <property type="term" value="P:gluconeogenesis"/>
    <property type="evidence" value="ECO:0007669"/>
    <property type="project" value="UniProtKB-UniRule"/>
</dbReference>
<dbReference type="GO" id="GO:0019253">
    <property type="term" value="P:reductive pentose-phosphate cycle"/>
    <property type="evidence" value="ECO:0007669"/>
    <property type="project" value="UniProtKB-UniPathway"/>
</dbReference>
<dbReference type="GO" id="GO:0005986">
    <property type="term" value="P:sucrose biosynthetic process"/>
    <property type="evidence" value="ECO:0007669"/>
    <property type="project" value="TreeGrafter"/>
</dbReference>
<dbReference type="CDD" id="cd00354">
    <property type="entry name" value="FBPase"/>
    <property type="match status" value="1"/>
</dbReference>
<dbReference type="FunFam" id="3.30.540.10:FF:000002">
    <property type="entry name" value="Fructose-1,6-bisphosphatase class 1"/>
    <property type="match status" value="1"/>
</dbReference>
<dbReference type="FunFam" id="3.40.190.80:FF:000001">
    <property type="entry name" value="Fructose-1,6-bisphosphatase class 1"/>
    <property type="match status" value="1"/>
</dbReference>
<dbReference type="Gene3D" id="3.40.190.80">
    <property type="match status" value="1"/>
</dbReference>
<dbReference type="Gene3D" id="3.30.540.10">
    <property type="entry name" value="Fructose-1,6-Bisphosphatase, subunit A, domain 1"/>
    <property type="match status" value="1"/>
</dbReference>
<dbReference type="HAMAP" id="MF_01855">
    <property type="entry name" value="FBPase_class1"/>
    <property type="match status" value="1"/>
</dbReference>
<dbReference type="InterPro" id="IPR044015">
    <property type="entry name" value="FBPase_C_dom"/>
</dbReference>
<dbReference type="InterPro" id="IPR000146">
    <property type="entry name" value="FBPase_class-1"/>
</dbReference>
<dbReference type="InterPro" id="IPR033391">
    <property type="entry name" value="FBPase_N"/>
</dbReference>
<dbReference type="InterPro" id="IPR028343">
    <property type="entry name" value="FBPtase"/>
</dbReference>
<dbReference type="NCBIfam" id="NF006778">
    <property type="entry name" value="PRK09293.1-1"/>
    <property type="match status" value="1"/>
</dbReference>
<dbReference type="PANTHER" id="PTHR11556">
    <property type="entry name" value="FRUCTOSE-1,6-BISPHOSPHATASE-RELATED"/>
    <property type="match status" value="1"/>
</dbReference>
<dbReference type="PANTHER" id="PTHR11556:SF35">
    <property type="entry name" value="SEDOHEPTULOSE-1,7-BISPHOSPHATASE, CHLOROPLASTIC"/>
    <property type="match status" value="1"/>
</dbReference>
<dbReference type="Pfam" id="PF00316">
    <property type="entry name" value="FBPase"/>
    <property type="match status" value="1"/>
</dbReference>
<dbReference type="Pfam" id="PF18913">
    <property type="entry name" value="FBPase_C"/>
    <property type="match status" value="1"/>
</dbReference>
<dbReference type="PIRSF" id="PIRSF500210">
    <property type="entry name" value="FBPtase"/>
    <property type="match status" value="1"/>
</dbReference>
<dbReference type="PIRSF" id="PIRSF000904">
    <property type="entry name" value="FBPtase_SBPase"/>
    <property type="match status" value="1"/>
</dbReference>
<dbReference type="PRINTS" id="PR00115">
    <property type="entry name" value="F16BPHPHTASE"/>
</dbReference>
<dbReference type="SUPFAM" id="SSF56655">
    <property type="entry name" value="Carbohydrate phosphatase"/>
    <property type="match status" value="1"/>
</dbReference>
<feature type="chain" id="PRO_0000364634" description="Fructose-1,6-bisphosphatase class 1">
    <location>
        <begin position="1"/>
        <end position="333"/>
    </location>
</feature>
<feature type="binding site" evidence="1">
    <location>
        <position position="92"/>
    </location>
    <ligand>
        <name>Mg(2+)</name>
        <dbReference type="ChEBI" id="CHEBI:18420"/>
        <label>1</label>
    </ligand>
</feature>
<feature type="binding site" evidence="1">
    <location>
        <position position="113"/>
    </location>
    <ligand>
        <name>Mg(2+)</name>
        <dbReference type="ChEBI" id="CHEBI:18420"/>
        <label>1</label>
    </ligand>
</feature>
<feature type="binding site" evidence="1">
    <location>
        <position position="113"/>
    </location>
    <ligand>
        <name>Mg(2+)</name>
        <dbReference type="ChEBI" id="CHEBI:18420"/>
        <label>2</label>
    </ligand>
</feature>
<feature type="binding site" evidence="1">
    <location>
        <position position="115"/>
    </location>
    <ligand>
        <name>Mg(2+)</name>
        <dbReference type="ChEBI" id="CHEBI:18420"/>
        <label>1</label>
    </ligand>
</feature>
<feature type="binding site" evidence="1">
    <location>
        <begin position="116"/>
        <end position="119"/>
    </location>
    <ligand>
        <name>substrate</name>
    </ligand>
</feature>
<feature type="binding site" evidence="1">
    <location>
        <position position="116"/>
    </location>
    <ligand>
        <name>Mg(2+)</name>
        <dbReference type="ChEBI" id="CHEBI:18420"/>
        <label>2</label>
    </ligand>
</feature>
<feature type="binding site" evidence="1">
    <location>
        <position position="209"/>
    </location>
    <ligand>
        <name>substrate</name>
    </ligand>
</feature>
<feature type="binding site" evidence="1">
    <location>
        <position position="242"/>
    </location>
    <ligand>
        <name>substrate</name>
    </ligand>
</feature>
<feature type="binding site" evidence="1">
    <location>
        <position position="272"/>
    </location>
    <ligand>
        <name>substrate</name>
    </ligand>
</feature>
<feature type="binding site" evidence="1">
    <location>
        <position position="278"/>
    </location>
    <ligand>
        <name>Mg(2+)</name>
        <dbReference type="ChEBI" id="CHEBI:18420"/>
        <label>2</label>
    </ligand>
</feature>
<accession>A4SDH2</accession>
<evidence type="ECO:0000255" key="1">
    <source>
        <dbReference type="HAMAP-Rule" id="MF_01855"/>
    </source>
</evidence>
<proteinExistence type="inferred from homology"/>
<organism>
    <name type="scientific">Chlorobium phaeovibrioides (strain DSM 265 / 1930)</name>
    <name type="common">Prosthecochloris vibrioformis (strain DSM 265)</name>
    <dbReference type="NCBI Taxonomy" id="290318"/>
    <lineage>
        <taxon>Bacteria</taxon>
        <taxon>Pseudomonadati</taxon>
        <taxon>Chlorobiota</taxon>
        <taxon>Chlorobiia</taxon>
        <taxon>Chlorobiales</taxon>
        <taxon>Chlorobiaceae</taxon>
        <taxon>Chlorobium/Pelodictyon group</taxon>
        <taxon>Chlorobium</taxon>
    </lineage>
</organism>
<reference key="1">
    <citation type="submission" date="2007-03" db="EMBL/GenBank/DDBJ databases">
        <title>Complete sequence of Prosthecochloris vibrioformis DSM 265.</title>
        <authorList>
            <consortium name="US DOE Joint Genome Institute"/>
            <person name="Copeland A."/>
            <person name="Lucas S."/>
            <person name="Lapidus A."/>
            <person name="Barry K."/>
            <person name="Detter J.C."/>
            <person name="Glavina del Rio T."/>
            <person name="Hammon N."/>
            <person name="Israni S."/>
            <person name="Pitluck S."/>
            <person name="Schmutz J."/>
            <person name="Larimer F."/>
            <person name="Land M."/>
            <person name="Hauser L."/>
            <person name="Mikhailova N."/>
            <person name="Li T."/>
            <person name="Overmann J."/>
            <person name="Schuster S.C."/>
            <person name="Bryant D.A."/>
            <person name="Richardson P."/>
        </authorList>
    </citation>
    <scope>NUCLEOTIDE SEQUENCE [LARGE SCALE GENOMIC DNA]</scope>
    <source>
        <strain>DSM 265 / 1930</strain>
    </source>
</reference>
<keyword id="KW-0113">Calvin cycle</keyword>
<keyword id="KW-0119">Carbohydrate metabolism</keyword>
<keyword id="KW-0963">Cytoplasm</keyword>
<keyword id="KW-0378">Hydrolase</keyword>
<keyword id="KW-0460">Magnesium</keyword>
<keyword id="KW-0479">Metal-binding</keyword>
<sequence length="333" mass="36886">MSKLITIERHILEQQKNFPEATGELTDLLSDVAFAAKLVRREVVRAGLVDILGFAGSTNVQGEEVKKLDLFANDKIINAIGQHGRFAIMGSEENEEIITPPNNENGSYALLFDPLDGSSNIDVNVSVGTIFSIYKIKNSDPRKADISDCLQKGSEQVAAGYVIYGSSVVMVYTTGNGVHGFTYDPTIGEFLLSHENIVTPKHGKYYSINEGSYAQFNDTTKKYLDYIKEEDSATGRPYSTRYIGSLVADFHRNLLTGGVFVYPPTTNHPNGKLRLMYEGNPLAYICEQAGGRATDGRRRILDIDPSELHQRTPLYIGSEDDVRVAEEFEQGIR</sequence>
<comment type="catalytic activity">
    <reaction evidence="1">
        <text>beta-D-fructose 1,6-bisphosphate + H2O = beta-D-fructose 6-phosphate + phosphate</text>
        <dbReference type="Rhea" id="RHEA:11064"/>
        <dbReference type="ChEBI" id="CHEBI:15377"/>
        <dbReference type="ChEBI" id="CHEBI:32966"/>
        <dbReference type="ChEBI" id="CHEBI:43474"/>
        <dbReference type="ChEBI" id="CHEBI:57634"/>
        <dbReference type="EC" id="3.1.3.11"/>
    </reaction>
</comment>
<comment type="cofactor">
    <cofactor evidence="1">
        <name>Mg(2+)</name>
        <dbReference type="ChEBI" id="CHEBI:18420"/>
    </cofactor>
    <text evidence="1">Binds 2 magnesium ions per subunit.</text>
</comment>
<comment type="pathway">
    <text evidence="1">Carbohydrate biosynthesis; Calvin cycle.</text>
</comment>
<comment type="subunit">
    <text evidence="1">Homotetramer.</text>
</comment>
<comment type="subcellular location">
    <subcellularLocation>
        <location evidence="1">Cytoplasm</location>
    </subcellularLocation>
</comment>
<comment type="similarity">
    <text evidence="1">Belongs to the FBPase class 1 family.</text>
</comment>